<dbReference type="EC" id="3.6.1.-" evidence="1"/>
<dbReference type="EMBL" id="CP000232">
    <property type="protein sequence ID" value="ABC19230.1"/>
    <property type="molecule type" value="Genomic_DNA"/>
</dbReference>
<dbReference type="RefSeq" id="YP_429773.1">
    <property type="nucleotide sequence ID" value="NC_007644.1"/>
</dbReference>
<dbReference type="SMR" id="Q2RK09"/>
<dbReference type="STRING" id="264732.Moth_0913"/>
<dbReference type="EnsemblBacteria" id="ABC19230">
    <property type="protein sequence ID" value="ABC19230"/>
    <property type="gene ID" value="Moth_0913"/>
</dbReference>
<dbReference type="KEGG" id="mta:Moth_0913"/>
<dbReference type="PATRIC" id="fig|264732.11.peg.981"/>
<dbReference type="eggNOG" id="COG1162">
    <property type="taxonomic scope" value="Bacteria"/>
</dbReference>
<dbReference type="HOGENOM" id="CLU_033617_2_1_9"/>
<dbReference type="OrthoDB" id="9809485at2"/>
<dbReference type="GO" id="GO:0005737">
    <property type="term" value="C:cytoplasm"/>
    <property type="evidence" value="ECO:0007669"/>
    <property type="project" value="UniProtKB-SubCell"/>
</dbReference>
<dbReference type="GO" id="GO:0005525">
    <property type="term" value="F:GTP binding"/>
    <property type="evidence" value="ECO:0007669"/>
    <property type="project" value="UniProtKB-UniRule"/>
</dbReference>
<dbReference type="GO" id="GO:0003924">
    <property type="term" value="F:GTPase activity"/>
    <property type="evidence" value="ECO:0007669"/>
    <property type="project" value="UniProtKB-UniRule"/>
</dbReference>
<dbReference type="GO" id="GO:0046872">
    <property type="term" value="F:metal ion binding"/>
    <property type="evidence" value="ECO:0007669"/>
    <property type="project" value="UniProtKB-KW"/>
</dbReference>
<dbReference type="GO" id="GO:0019843">
    <property type="term" value="F:rRNA binding"/>
    <property type="evidence" value="ECO:0007669"/>
    <property type="project" value="UniProtKB-KW"/>
</dbReference>
<dbReference type="GO" id="GO:0042274">
    <property type="term" value="P:ribosomal small subunit biogenesis"/>
    <property type="evidence" value="ECO:0007669"/>
    <property type="project" value="UniProtKB-UniRule"/>
</dbReference>
<dbReference type="CDD" id="cd04466">
    <property type="entry name" value="S1_YloQ_GTPase"/>
    <property type="match status" value="1"/>
</dbReference>
<dbReference type="CDD" id="cd01854">
    <property type="entry name" value="YjeQ_EngC"/>
    <property type="match status" value="1"/>
</dbReference>
<dbReference type="Gene3D" id="2.40.50.140">
    <property type="entry name" value="Nucleic acid-binding proteins"/>
    <property type="match status" value="1"/>
</dbReference>
<dbReference type="Gene3D" id="3.40.50.300">
    <property type="entry name" value="P-loop containing nucleotide triphosphate hydrolases"/>
    <property type="match status" value="1"/>
</dbReference>
<dbReference type="Gene3D" id="1.10.40.50">
    <property type="entry name" value="Probable gtpase engc, domain 3"/>
    <property type="match status" value="1"/>
</dbReference>
<dbReference type="HAMAP" id="MF_01820">
    <property type="entry name" value="GTPase_RsgA"/>
    <property type="match status" value="1"/>
</dbReference>
<dbReference type="InterPro" id="IPR030378">
    <property type="entry name" value="G_CP_dom"/>
</dbReference>
<dbReference type="InterPro" id="IPR012340">
    <property type="entry name" value="NA-bd_OB-fold"/>
</dbReference>
<dbReference type="InterPro" id="IPR027417">
    <property type="entry name" value="P-loop_NTPase"/>
</dbReference>
<dbReference type="InterPro" id="IPR004881">
    <property type="entry name" value="Ribosome_biogen_GTPase_RsgA"/>
</dbReference>
<dbReference type="InterPro" id="IPR010914">
    <property type="entry name" value="RsgA_GTPase_dom"/>
</dbReference>
<dbReference type="InterPro" id="IPR031944">
    <property type="entry name" value="RsgA_N"/>
</dbReference>
<dbReference type="NCBIfam" id="TIGR00157">
    <property type="entry name" value="ribosome small subunit-dependent GTPase A"/>
    <property type="match status" value="1"/>
</dbReference>
<dbReference type="PANTHER" id="PTHR32120">
    <property type="entry name" value="SMALL RIBOSOMAL SUBUNIT BIOGENESIS GTPASE RSGA"/>
    <property type="match status" value="1"/>
</dbReference>
<dbReference type="PANTHER" id="PTHR32120:SF11">
    <property type="entry name" value="SMALL RIBOSOMAL SUBUNIT BIOGENESIS GTPASE RSGA 1, MITOCHONDRIAL-RELATED"/>
    <property type="match status" value="1"/>
</dbReference>
<dbReference type="Pfam" id="PF03193">
    <property type="entry name" value="RsgA_GTPase"/>
    <property type="match status" value="1"/>
</dbReference>
<dbReference type="Pfam" id="PF16745">
    <property type="entry name" value="RsgA_N"/>
    <property type="match status" value="1"/>
</dbReference>
<dbReference type="SUPFAM" id="SSF50249">
    <property type="entry name" value="Nucleic acid-binding proteins"/>
    <property type="match status" value="1"/>
</dbReference>
<dbReference type="SUPFAM" id="SSF52540">
    <property type="entry name" value="P-loop containing nucleoside triphosphate hydrolases"/>
    <property type="match status" value="1"/>
</dbReference>
<dbReference type="PROSITE" id="PS50936">
    <property type="entry name" value="ENGC_GTPASE"/>
    <property type="match status" value="1"/>
</dbReference>
<dbReference type="PROSITE" id="PS51721">
    <property type="entry name" value="G_CP"/>
    <property type="match status" value="1"/>
</dbReference>
<protein>
    <recommendedName>
        <fullName evidence="1">Small ribosomal subunit biogenesis GTPase RsgA</fullName>
        <ecNumber evidence="1">3.6.1.-</ecNumber>
    </recommendedName>
</protein>
<accession>Q2RK09</accession>
<sequence>MEGTLLRRYGGFYYVESEGRVWTCRLRGRFRLQETVFLPGDRVEIKPVGPGEGVIEDLKPRRTCLKRPAVANVEQVIIVFALREPPPDLELLDRLLFLSGVEDIEAVIVWNKADISKQEYAGLPELYRQIGYRNLITSAHTGQGIDELKALLAGRLSTFAGPSGVGKSSLLNAIQPGLNLRTGEVSSKGGRGRHTTRQAELIRLPDGGWVADTPGFSRLDLPAITREEVAAYFPEMEPLRGRCRYASCLHRKEPGCAVVAAVEAGLIIKHRYEHYLTFLAEVIARERSFS</sequence>
<keyword id="KW-0963">Cytoplasm</keyword>
<keyword id="KW-0342">GTP-binding</keyword>
<keyword id="KW-0378">Hydrolase</keyword>
<keyword id="KW-0479">Metal-binding</keyword>
<keyword id="KW-0547">Nucleotide-binding</keyword>
<keyword id="KW-0690">Ribosome biogenesis</keyword>
<keyword id="KW-0694">RNA-binding</keyword>
<keyword id="KW-0699">rRNA-binding</keyword>
<keyword id="KW-0862">Zinc</keyword>
<gene>
    <name evidence="1" type="primary">rsgA</name>
    <name type="ordered locus">Moth_0913</name>
</gene>
<name>RSGA_MOOTA</name>
<organism>
    <name type="scientific">Moorella thermoacetica (strain ATCC 39073 / JCM 9320)</name>
    <dbReference type="NCBI Taxonomy" id="264732"/>
    <lineage>
        <taxon>Bacteria</taxon>
        <taxon>Bacillati</taxon>
        <taxon>Bacillota</taxon>
        <taxon>Clostridia</taxon>
        <taxon>Moorellales</taxon>
        <taxon>Moorellaceae</taxon>
        <taxon>Moorella</taxon>
    </lineage>
</organism>
<reference key="1">
    <citation type="journal article" date="2008" name="Environ. Microbiol.">
        <title>The complete genome sequence of Moorella thermoacetica (f. Clostridium thermoaceticum).</title>
        <authorList>
            <person name="Pierce E."/>
            <person name="Xie G."/>
            <person name="Barabote R.D."/>
            <person name="Saunders E."/>
            <person name="Han C.S."/>
            <person name="Detter J.C."/>
            <person name="Richardson P."/>
            <person name="Brettin T.S."/>
            <person name="Das A."/>
            <person name="Ljungdahl L.G."/>
            <person name="Ragsdale S.W."/>
        </authorList>
    </citation>
    <scope>NUCLEOTIDE SEQUENCE [LARGE SCALE GENOMIC DNA]</scope>
    <source>
        <strain>ATCC 39073 / JCM 9320</strain>
    </source>
</reference>
<feature type="chain" id="PRO_1000216044" description="Small ribosomal subunit biogenesis GTPase RsgA">
    <location>
        <begin position="1"/>
        <end position="290"/>
    </location>
</feature>
<feature type="domain" description="CP-type G" evidence="2">
    <location>
        <begin position="62"/>
        <end position="219"/>
    </location>
</feature>
<feature type="binding site" evidence="1">
    <location>
        <begin position="111"/>
        <end position="114"/>
    </location>
    <ligand>
        <name>GTP</name>
        <dbReference type="ChEBI" id="CHEBI:37565"/>
    </ligand>
</feature>
<feature type="binding site" evidence="1">
    <location>
        <begin position="161"/>
        <end position="169"/>
    </location>
    <ligand>
        <name>GTP</name>
        <dbReference type="ChEBI" id="CHEBI:37565"/>
    </ligand>
</feature>
<feature type="binding site" evidence="1">
    <location>
        <position position="243"/>
    </location>
    <ligand>
        <name>Zn(2+)</name>
        <dbReference type="ChEBI" id="CHEBI:29105"/>
    </ligand>
</feature>
<feature type="binding site" evidence="1">
    <location>
        <position position="248"/>
    </location>
    <ligand>
        <name>Zn(2+)</name>
        <dbReference type="ChEBI" id="CHEBI:29105"/>
    </ligand>
</feature>
<feature type="binding site" evidence="1">
    <location>
        <position position="250"/>
    </location>
    <ligand>
        <name>Zn(2+)</name>
        <dbReference type="ChEBI" id="CHEBI:29105"/>
    </ligand>
</feature>
<feature type="binding site" evidence="1">
    <location>
        <position position="256"/>
    </location>
    <ligand>
        <name>Zn(2+)</name>
        <dbReference type="ChEBI" id="CHEBI:29105"/>
    </ligand>
</feature>
<evidence type="ECO:0000255" key="1">
    <source>
        <dbReference type="HAMAP-Rule" id="MF_01820"/>
    </source>
</evidence>
<evidence type="ECO:0000255" key="2">
    <source>
        <dbReference type="PROSITE-ProRule" id="PRU01058"/>
    </source>
</evidence>
<comment type="function">
    <text evidence="1">One of several proteins that assist in the late maturation steps of the functional core of the 30S ribosomal subunit. Helps release RbfA from mature subunits. May play a role in the assembly of ribosomal proteins into the subunit. Circularly permuted GTPase that catalyzes slow GTP hydrolysis, GTPase activity is stimulated by the 30S ribosomal subunit.</text>
</comment>
<comment type="cofactor">
    <cofactor evidence="1">
        <name>Zn(2+)</name>
        <dbReference type="ChEBI" id="CHEBI:29105"/>
    </cofactor>
    <text evidence="1">Binds 1 zinc ion per subunit.</text>
</comment>
<comment type="subunit">
    <text evidence="1">Monomer. Associates with 30S ribosomal subunit, binds 16S rRNA.</text>
</comment>
<comment type="subcellular location">
    <subcellularLocation>
        <location evidence="1">Cytoplasm</location>
    </subcellularLocation>
</comment>
<comment type="similarity">
    <text evidence="1">Belongs to the TRAFAC class YlqF/YawG GTPase family. RsgA subfamily.</text>
</comment>
<proteinExistence type="inferred from homology"/>